<comment type="function">
    <text evidence="1">Required for rescue of stalled ribosomes mediated by trans-translation. Binds to transfer-messenger RNA (tmRNA), required for stable association of tmRNA with ribosomes. tmRNA and SmpB together mimic tRNA shape, replacing the anticodon stem-loop with SmpB. tmRNA is encoded by the ssrA gene; the 2 termini fold to resemble tRNA(Ala) and it encodes a 'tag peptide', a short internal open reading frame. During trans-translation Ala-aminoacylated tmRNA acts like a tRNA, entering the A-site of stalled ribosomes, displacing the stalled mRNA. The ribosome then switches to translate the ORF on the tmRNA; the nascent peptide is terminated with the 'tag peptide' encoded by the tmRNA and targeted for degradation. The ribosome is freed to recommence translation, which seems to be the essential function of trans-translation.</text>
</comment>
<comment type="subcellular location">
    <subcellularLocation>
        <location evidence="1">Cytoplasm</location>
    </subcellularLocation>
    <text evidence="1">The tmRNA-SmpB complex associates with stalled 70S ribosomes.</text>
</comment>
<comment type="similarity">
    <text evidence="1">Belongs to the SmpB family.</text>
</comment>
<keyword id="KW-0963">Cytoplasm</keyword>
<keyword id="KW-1185">Reference proteome</keyword>
<keyword id="KW-0694">RNA-binding</keyword>
<sequence length="163" mass="18641">MVKKNSSKAAPATIARNKRATFEYRFEEKMEAGLSLMGWEVKSIRMGKVNLSDCYVFLKNGEAFMHGCTIIPLNTASTHVVCDPLRLKKLLLSRKELDKLAGLVERQGYSIIPISMYWRKGAWVKVEIGLGKGKKDHDKREDTKAREWEVEKARVMKKEKTHG</sequence>
<gene>
    <name evidence="1" type="primary">smpB</name>
    <name type="ordered locus">Sbal_1307</name>
</gene>
<feature type="chain" id="PRO_1000002137" description="SsrA-binding protein">
    <location>
        <begin position="1"/>
        <end position="163"/>
    </location>
</feature>
<accession>A3D262</accession>
<proteinExistence type="inferred from homology"/>
<name>SSRP_SHEB5</name>
<protein>
    <recommendedName>
        <fullName evidence="1">SsrA-binding protein</fullName>
    </recommendedName>
    <alternativeName>
        <fullName evidence="1">Small protein B</fullName>
    </alternativeName>
</protein>
<reference key="1">
    <citation type="submission" date="2007-02" db="EMBL/GenBank/DDBJ databases">
        <title>Complete sequence of chromosome of Shewanella baltica OS155.</title>
        <authorList>
            <consortium name="US DOE Joint Genome Institute"/>
            <person name="Copeland A."/>
            <person name="Lucas S."/>
            <person name="Lapidus A."/>
            <person name="Barry K."/>
            <person name="Detter J.C."/>
            <person name="Glavina del Rio T."/>
            <person name="Hammon N."/>
            <person name="Israni S."/>
            <person name="Dalin E."/>
            <person name="Tice H."/>
            <person name="Pitluck S."/>
            <person name="Sims D.R."/>
            <person name="Brettin T."/>
            <person name="Bruce D."/>
            <person name="Han C."/>
            <person name="Tapia R."/>
            <person name="Brainard J."/>
            <person name="Schmutz J."/>
            <person name="Larimer F."/>
            <person name="Land M."/>
            <person name="Hauser L."/>
            <person name="Kyrpides N."/>
            <person name="Mikhailova N."/>
            <person name="Brettar I."/>
            <person name="Klappenbach J."/>
            <person name="Konstantinidis K."/>
            <person name="Rodrigues J."/>
            <person name="Tiedje J."/>
            <person name="Richardson P."/>
        </authorList>
    </citation>
    <scope>NUCLEOTIDE SEQUENCE [LARGE SCALE GENOMIC DNA]</scope>
    <source>
        <strain>OS155 / ATCC BAA-1091</strain>
    </source>
</reference>
<organism>
    <name type="scientific">Shewanella baltica (strain OS155 / ATCC BAA-1091)</name>
    <dbReference type="NCBI Taxonomy" id="325240"/>
    <lineage>
        <taxon>Bacteria</taxon>
        <taxon>Pseudomonadati</taxon>
        <taxon>Pseudomonadota</taxon>
        <taxon>Gammaproteobacteria</taxon>
        <taxon>Alteromonadales</taxon>
        <taxon>Shewanellaceae</taxon>
        <taxon>Shewanella</taxon>
    </lineage>
</organism>
<dbReference type="EMBL" id="CP000563">
    <property type="protein sequence ID" value="ABN60825.1"/>
    <property type="molecule type" value="Genomic_DNA"/>
</dbReference>
<dbReference type="RefSeq" id="WP_006080832.1">
    <property type="nucleotide sequence ID" value="NC_009052.1"/>
</dbReference>
<dbReference type="SMR" id="A3D262"/>
<dbReference type="STRING" id="325240.Sbal_1307"/>
<dbReference type="GeneID" id="11771594"/>
<dbReference type="KEGG" id="sbl:Sbal_1307"/>
<dbReference type="HOGENOM" id="CLU_108953_3_0_6"/>
<dbReference type="OrthoDB" id="9805462at2"/>
<dbReference type="Proteomes" id="UP000001557">
    <property type="component" value="Chromosome"/>
</dbReference>
<dbReference type="GO" id="GO:0005829">
    <property type="term" value="C:cytosol"/>
    <property type="evidence" value="ECO:0007669"/>
    <property type="project" value="TreeGrafter"/>
</dbReference>
<dbReference type="GO" id="GO:0003723">
    <property type="term" value="F:RNA binding"/>
    <property type="evidence" value="ECO:0007669"/>
    <property type="project" value="UniProtKB-UniRule"/>
</dbReference>
<dbReference type="GO" id="GO:0070929">
    <property type="term" value="P:trans-translation"/>
    <property type="evidence" value="ECO:0007669"/>
    <property type="project" value="UniProtKB-UniRule"/>
</dbReference>
<dbReference type="CDD" id="cd09294">
    <property type="entry name" value="SmpB"/>
    <property type="match status" value="1"/>
</dbReference>
<dbReference type="Gene3D" id="2.40.280.10">
    <property type="match status" value="1"/>
</dbReference>
<dbReference type="HAMAP" id="MF_00023">
    <property type="entry name" value="SmpB"/>
    <property type="match status" value="1"/>
</dbReference>
<dbReference type="InterPro" id="IPR023620">
    <property type="entry name" value="SmpB"/>
</dbReference>
<dbReference type="InterPro" id="IPR000037">
    <property type="entry name" value="SsrA-bd_prot"/>
</dbReference>
<dbReference type="InterPro" id="IPR020081">
    <property type="entry name" value="SsrA-bd_prot_CS"/>
</dbReference>
<dbReference type="NCBIfam" id="NF003843">
    <property type="entry name" value="PRK05422.1"/>
    <property type="match status" value="1"/>
</dbReference>
<dbReference type="NCBIfam" id="TIGR00086">
    <property type="entry name" value="smpB"/>
    <property type="match status" value="1"/>
</dbReference>
<dbReference type="PANTHER" id="PTHR30308:SF2">
    <property type="entry name" value="SSRA-BINDING PROTEIN"/>
    <property type="match status" value="1"/>
</dbReference>
<dbReference type="PANTHER" id="PTHR30308">
    <property type="entry name" value="TMRNA-BINDING COMPONENT OF TRANS-TRANSLATION TAGGING COMPLEX"/>
    <property type="match status" value="1"/>
</dbReference>
<dbReference type="Pfam" id="PF01668">
    <property type="entry name" value="SmpB"/>
    <property type="match status" value="1"/>
</dbReference>
<dbReference type="SUPFAM" id="SSF74982">
    <property type="entry name" value="Small protein B (SmpB)"/>
    <property type="match status" value="1"/>
</dbReference>
<dbReference type="PROSITE" id="PS01317">
    <property type="entry name" value="SSRP"/>
    <property type="match status" value="1"/>
</dbReference>
<evidence type="ECO:0000255" key="1">
    <source>
        <dbReference type="HAMAP-Rule" id="MF_00023"/>
    </source>
</evidence>